<organism evidence="22">
    <name type="scientific">Drosophila melanogaster</name>
    <name type="common">Fruit fly</name>
    <dbReference type="NCBI Taxonomy" id="7227"/>
    <lineage>
        <taxon>Eukaryota</taxon>
        <taxon>Metazoa</taxon>
        <taxon>Ecdysozoa</taxon>
        <taxon>Arthropoda</taxon>
        <taxon>Hexapoda</taxon>
        <taxon>Insecta</taxon>
        <taxon>Pterygota</taxon>
        <taxon>Neoptera</taxon>
        <taxon>Endopterygota</taxon>
        <taxon>Diptera</taxon>
        <taxon>Brachycera</taxon>
        <taxon>Muscomorpha</taxon>
        <taxon>Ephydroidea</taxon>
        <taxon>Drosophilidae</taxon>
        <taxon>Drosophila</taxon>
        <taxon>Sophophora</taxon>
    </lineage>
</organism>
<reference evidence="12" key="1">
    <citation type="journal article" date="2000" name="Biochem. Biophys. Res. Commun.">
        <title>Expression and evolution of the Drosophila attacin/diptericin gene family.</title>
        <authorList>
            <person name="Hedengren M."/>
            <person name="Borge K."/>
            <person name="Hultmark D."/>
        </authorList>
    </citation>
    <scope>NUCLEOTIDE SEQUENCE [GENOMIC DNA / MRNA]</scope>
    <scope>INDUCTION</scope>
    <source>
        <strain evidence="13">Canton-S</strain>
    </source>
</reference>
<reference evidence="12" key="2">
    <citation type="journal article" date="2001" name="Genetics">
        <title>Evidence for recurrent paralogous gene conversion and exceptional allelic divergence in the attacin genes of Drosophila melanogaster.</title>
        <authorList>
            <person name="Lazzaro B.P."/>
            <person name="Clark A.G."/>
        </authorList>
    </citation>
    <scope>NUCLEOTIDE SEQUENCE [GENOMIC DNA]</scope>
    <scope>VARIANTS</scope>
    <source>
        <strain evidence="14">2CPA 1</strain>
        <strain evidence="21">2CPA 103</strain>
        <strain evidence="22">2CPA 105</strain>
        <strain evidence="23">2CPA 118</strain>
        <strain evidence="16">2CPA 12</strain>
        <strain evidence="24">2CPA 122</strain>
        <strain evidence="25">2CPA 129</strain>
        <strain evidence="17">2CPA 14</strain>
        <strain evidence="18">2CPA 43</strain>
        <strain evidence="19">2CPA 46</strain>
        <strain evidence="20">2CPA 51</strain>
        <strain evidence="15">2CPA 7</strain>
    </source>
</reference>
<reference evidence="12" key="3">
    <citation type="journal article" date="2000" name="Science">
        <title>The genome sequence of Drosophila melanogaster.</title>
        <authorList>
            <person name="Adams M.D."/>
            <person name="Celniker S.E."/>
            <person name="Holt R.A."/>
            <person name="Evans C.A."/>
            <person name="Gocayne J.D."/>
            <person name="Amanatides P.G."/>
            <person name="Scherer S.E."/>
            <person name="Li P.W."/>
            <person name="Hoskins R.A."/>
            <person name="Galle R.F."/>
            <person name="George R.A."/>
            <person name="Lewis S.E."/>
            <person name="Richards S."/>
            <person name="Ashburner M."/>
            <person name="Henderson S.N."/>
            <person name="Sutton G.G."/>
            <person name="Wortman J.R."/>
            <person name="Yandell M.D."/>
            <person name="Zhang Q."/>
            <person name="Chen L.X."/>
            <person name="Brandon R.C."/>
            <person name="Rogers Y.-H.C."/>
            <person name="Blazej R.G."/>
            <person name="Champe M."/>
            <person name="Pfeiffer B.D."/>
            <person name="Wan K.H."/>
            <person name="Doyle C."/>
            <person name="Baxter E.G."/>
            <person name="Helt G."/>
            <person name="Nelson C.R."/>
            <person name="Miklos G.L.G."/>
            <person name="Abril J.F."/>
            <person name="Agbayani A."/>
            <person name="An H.-J."/>
            <person name="Andrews-Pfannkoch C."/>
            <person name="Baldwin D."/>
            <person name="Ballew R.M."/>
            <person name="Basu A."/>
            <person name="Baxendale J."/>
            <person name="Bayraktaroglu L."/>
            <person name="Beasley E.M."/>
            <person name="Beeson K.Y."/>
            <person name="Benos P.V."/>
            <person name="Berman B.P."/>
            <person name="Bhandari D."/>
            <person name="Bolshakov S."/>
            <person name="Borkova D."/>
            <person name="Botchan M.R."/>
            <person name="Bouck J."/>
            <person name="Brokstein P."/>
            <person name="Brottier P."/>
            <person name="Burtis K.C."/>
            <person name="Busam D.A."/>
            <person name="Butler H."/>
            <person name="Cadieu E."/>
            <person name="Center A."/>
            <person name="Chandra I."/>
            <person name="Cherry J.M."/>
            <person name="Cawley S."/>
            <person name="Dahlke C."/>
            <person name="Davenport L.B."/>
            <person name="Davies P."/>
            <person name="de Pablos B."/>
            <person name="Delcher A."/>
            <person name="Deng Z."/>
            <person name="Mays A.D."/>
            <person name="Dew I."/>
            <person name="Dietz S.M."/>
            <person name="Dodson K."/>
            <person name="Doup L.E."/>
            <person name="Downes M."/>
            <person name="Dugan-Rocha S."/>
            <person name="Dunkov B.C."/>
            <person name="Dunn P."/>
            <person name="Durbin K.J."/>
            <person name="Evangelista C.C."/>
            <person name="Ferraz C."/>
            <person name="Ferriera S."/>
            <person name="Fleischmann W."/>
            <person name="Fosler C."/>
            <person name="Gabrielian A.E."/>
            <person name="Garg N.S."/>
            <person name="Gelbart W.M."/>
            <person name="Glasser K."/>
            <person name="Glodek A."/>
            <person name="Gong F."/>
            <person name="Gorrell J.H."/>
            <person name="Gu Z."/>
            <person name="Guan P."/>
            <person name="Harris M."/>
            <person name="Harris N.L."/>
            <person name="Harvey D.A."/>
            <person name="Heiman T.J."/>
            <person name="Hernandez J.R."/>
            <person name="Houck J."/>
            <person name="Hostin D."/>
            <person name="Houston K.A."/>
            <person name="Howland T.J."/>
            <person name="Wei M.-H."/>
            <person name="Ibegwam C."/>
            <person name="Jalali M."/>
            <person name="Kalush F."/>
            <person name="Karpen G.H."/>
            <person name="Ke Z."/>
            <person name="Kennison J.A."/>
            <person name="Ketchum K.A."/>
            <person name="Kimmel B.E."/>
            <person name="Kodira C.D."/>
            <person name="Kraft C.L."/>
            <person name="Kravitz S."/>
            <person name="Kulp D."/>
            <person name="Lai Z."/>
            <person name="Lasko P."/>
            <person name="Lei Y."/>
            <person name="Levitsky A.A."/>
            <person name="Li J.H."/>
            <person name="Li Z."/>
            <person name="Liang Y."/>
            <person name="Lin X."/>
            <person name="Liu X."/>
            <person name="Mattei B."/>
            <person name="McIntosh T.C."/>
            <person name="McLeod M.P."/>
            <person name="McPherson D."/>
            <person name="Merkulov G."/>
            <person name="Milshina N.V."/>
            <person name="Mobarry C."/>
            <person name="Morris J."/>
            <person name="Moshrefi A."/>
            <person name="Mount S.M."/>
            <person name="Moy M."/>
            <person name="Murphy B."/>
            <person name="Murphy L."/>
            <person name="Muzny D.M."/>
            <person name="Nelson D.L."/>
            <person name="Nelson D.R."/>
            <person name="Nelson K.A."/>
            <person name="Nixon K."/>
            <person name="Nusskern D.R."/>
            <person name="Pacleb J.M."/>
            <person name="Palazzolo M."/>
            <person name="Pittman G.S."/>
            <person name="Pan S."/>
            <person name="Pollard J."/>
            <person name="Puri V."/>
            <person name="Reese M.G."/>
            <person name="Reinert K."/>
            <person name="Remington K."/>
            <person name="Saunders R.D.C."/>
            <person name="Scheeler F."/>
            <person name="Shen H."/>
            <person name="Shue B.C."/>
            <person name="Siden-Kiamos I."/>
            <person name="Simpson M."/>
            <person name="Skupski M.P."/>
            <person name="Smith T.J."/>
            <person name="Spier E."/>
            <person name="Spradling A.C."/>
            <person name="Stapleton M."/>
            <person name="Strong R."/>
            <person name="Sun E."/>
            <person name="Svirskas R."/>
            <person name="Tector C."/>
            <person name="Turner R."/>
            <person name="Venter E."/>
            <person name="Wang A.H."/>
            <person name="Wang X."/>
            <person name="Wang Z.-Y."/>
            <person name="Wassarman D.A."/>
            <person name="Weinstock G.M."/>
            <person name="Weissenbach J."/>
            <person name="Williams S.M."/>
            <person name="Woodage T."/>
            <person name="Worley K.C."/>
            <person name="Wu D."/>
            <person name="Yang S."/>
            <person name="Yao Q.A."/>
            <person name="Ye J."/>
            <person name="Yeh R.-F."/>
            <person name="Zaveri J.S."/>
            <person name="Zhan M."/>
            <person name="Zhang G."/>
            <person name="Zhao Q."/>
            <person name="Zheng L."/>
            <person name="Zheng X.H."/>
            <person name="Zhong F.N."/>
            <person name="Zhong W."/>
            <person name="Zhou X."/>
            <person name="Zhu S.C."/>
            <person name="Zhu X."/>
            <person name="Smith H.O."/>
            <person name="Gibbs R.A."/>
            <person name="Myers E.W."/>
            <person name="Rubin G.M."/>
            <person name="Venter J.C."/>
        </authorList>
    </citation>
    <scope>NUCLEOTIDE SEQUENCE [LARGE SCALE GENOMIC DNA]</scope>
    <source>
        <strain evidence="2">Berkeley</strain>
    </source>
</reference>
<reference evidence="12" key="4">
    <citation type="journal article" date="2002" name="Genome Biol.">
        <title>Annotation of the Drosophila melanogaster euchromatic genome: a systematic review.</title>
        <authorList>
            <person name="Misra S."/>
            <person name="Crosby M.A."/>
            <person name="Mungall C.J."/>
            <person name="Matthews B.B."/>
            <person name="Campbell K.S."/>
            <person name="Hradecky P."/>
            <person name="Huang Y."/>
            <person name="Kaminker J.S."/>
            <person name="Millburn G.H."/>
            <person name="Prochnik S.E."/>
            <person name="Smith C.D."/>
            <person name="Tupy J.L."/>
            <person name="Whitfield E.J."/>
            <person name="Bayraktaroglu L."/>
            <person name="Berman B.P."/>
            <person name="Bettencourt B.R."/>
            <person name="Celniker S.E."/>
            <person name="de Grey A.D.N.J."/>
            <person name="Drysdale R.A."/>
            <person name="Harris N.L."/>
            <person name="Richter J."/>
            <person name="Russo S."/>
            <person name="Schroeder A.J."/>
            <person name="Shu S.Q."/>
            <person name="Stapleton M."/>
            <person name="Yamada C."/>
            <person name="Ashburner M."/>
            <person name="Gelbart W.M."/>
            <person name="Rubin G.M."/>
            <person name="Lewis S.E."/>
        </authorList>
    </citation>
    <scope>GENOME REANNOTATION</scope>
    <source>
        <strain>Berkeley</strain>
    </source>
</reference>
<reference key="5">
    <citation type="journal article" date="2004" name="J. Biol. Chem.">
        <title>Primary structure and in vitro antibacterial properties of the Drosophila melanogaster attacin C Pro-domain.</title>
        <authorList>
            <person name="Rabel D."/>
            <person name="Charlet M."/>
            <person name="Ehret-Sabatier L."/>
            <person name="Cavicchioli L."/>
            <person name="Cudic M."/>
            <person name="Otvos L. Jr."/>
            <person name="Bulet P."/>
        </authorList>
    </citation>
    <scope>PROTEIN SEQUENCE OF 24-46</scope>
    <scope>SUBCELLULAR LOCATION</scope>
    <scope>TISSUE SPECIFICITY</scope>
    <scope>PYROGLUTAMATE FORMATION AT GLN-24</scope>
    <scope>GLYCOSYLATION AT THR-39</scope>
    <scope>ANTIMICROBIAL ACTIVITY</scope>
    <scope>IDENTIFICATION BY MASS SPECTROMETRY</scope>
    <source>
        <strain evidence="8">Oregon-R</strain>
        <tissue evidence="8">Hemolymph</tissue>
    </source>
</reference>
<reference evidence="12" key="6">
    <citation type="journal article" date="1998" name="Proc. Natl. Acad. Sci. U.S.A.">
        <title>Differential display of peptides induced during the immune response of Drosophila: a matrix-assisted laser desorption ionization time-of-flight mass spectrometry study.</title>
        <authorList>
            <person name="Uttenweiler-Joseph S."/>
            <person name="Moniatte M."/>
            <person name="Lagueux M."/>
            <person name="van Dorsselaer A."/>
            <person name="Hoffmann J.A."/>
            <person name="Bulet P."/>
        </authorList>
    </citation>
    <scope>MASS SPECTROMETRY</scope>
    <scope>SUBCELLULAR LOCATION</scope>
    <scope>TISSUE SPECIFICITY</scope>
    <scope>INDUCTION BY BACTERIA</scope>
    <source>
        <strain evidence="11">Oregon-R</strain>
        <tissue evidence="11">Hemolymph</tissue>
    </source>
</reference>
<reference key="7">
    <citation type="journal article" date="2006" name="J. Insect Physiol.">
        <title>Identification of new immune induced molecules in the haemolymph of Drosophila melanogaster by 2D-nanoLC MS/MS.</title>
        <authorList>
            <person name="Verleyen P."/>
            <person name="Baggerman G."/>
            <person name="D'Hertog W."/>
            <person name="Vierstraete E."/>
            <person name="Husson S.J."/>
            <person name="Schoofs L."/>
        </authorList>
    </citation>
    <scope>SUBCELLULAR LOCATION</scope>
    <scope>TISSUE SPECIFICITY</scope>
    <scope>INDUCTION BY BACTERIA</scope>
    <scope>IDENTIFICATION BY MASS SPECTROMETRY</scope>
    <source>
        <tissue evidence="9">Hemolymph</tissue>
    </source>
</reference>
<reference key="8">
    <citation type="journal article" date="2008" name="J. Proteome Res.">
        <title>Phosphoproteome analysis of Drosophila melanogaster embryos.</title>
        <authorList>
            <person name="Zhai B."/>
            <person name="Villen J."/>
            <person name="Beausoleil S.A."/>
            <person name="Mintseris J."/>
            <person name="Gygi S.P."/>
        </authorList>
    </citation>
    <scope>PHOSPHORYLATION [LARGE SCALE ANALYSIS] AT SER-127</scope>
    <scope>IDENTIFICATION BY MASS SPECTROMETRY</scope>
    <source>
        <tissue evidence="10">Embryo</tissue>
    </source>
</reference>
<evidence type="ECO:0000255" key="1"/>
<evidence type="ECO:0000269" key="2">
    <source>
    </source>
</evidence>
<evidence type="ECO:0000269" key="3">
    <source>
    </source>
</evidence>
<evidence type="ECO:0000269" key="4">
    <source>
    </source>
</evidence>
<evidence type="ECO:0000269" key="5">
    <source>
    </source>
</evidence>
<evidence type="ECO:0000269" key="6">
    <source>
    </source>
</evidence>
<evidence type="ECO:0000303" key="7">
    <source>
    </source>
</evidence>
<evidence type="ECO:0000303" key="8">
    <source>
    </source>
</evidence>
<evidence type="ECO:0000303" key="9">
    <source>
    </source>
</evidence>
<evidence type="ECO:0000303" key="10">
    <source>
    </source>
</evidence>
<evidence type="ECO:0000303" key="11">
    <source>
    </source>
</evidence>
<evidence type="ECO:0000305" key="12"/>
<evidence type="ECO:0000312" key="13">
    <source>
        <dbReference type="EMBL" id="AAG42833.2"/>
    </source>
</evidence>
<evidence type="ECO:0000312" key="14">
    <source>
        <dbReference type="EMBL" id="AAL23629.1"/>
    </source>
</evidence>
<evidence type="ECO:0000312" key="15">
    <source>
        <dbReference type="EMBL" id="AAL23630.1"/>
    </source>
</evidence>
<evidence type="ECO:0000312" key="16">
    <source>
        <dbReference type="EMBL" id="AAL23631.1"/>
    </source>
</evidence>
<evidence type="ECO:0000312" key="17">
    <source>
        <dbReference type="EMBL" id="AAL23632.1"/>
    </source>
</evidence>
<evidence type="ECO:0000312" key="18">
    <source>
        <dbReference type="EMBL" id="AAL23633.1"/>
    </source>
</evidence>
<evidence type="ECO:0000312" key="19">
    <source>
        <dbReference type="EMBL" id="AAL23634.1"/>
    </source>
</evidence>
<evidence type="ECO:0000312" key="20">
    <source>
        <dbReference type="EMBL" id="AAL23635.1"/>
    </source>
</evidence>
<evidence type="ECO:0000312" key="21">
    <source>
        <dbReference type="EMBL" id="AAL23636.1"/>
    </source>
</evidence>
<evidence type="ECO:0000312" key="22">
    <source>
        <dbReference type="EMBL" id="AAL23637.1"/>
    </source>
</evidence>
<evidence type="ECO:0000312" key="23">
    <source>
        <dbReference type="EMBL" id="AAL23638.1"/>
    </source>
</evidence>
<evidence type="ECO:0000312" key="24">
    <source>
        <dbReference type="EMBL" id="AAL23639.1"/>
    </source>
</evidence>
<evidence type="ECO:0000312" key="25">
    <source>
        <dbReference type="EMBL" id="AAL23640.1"/>
    </source>
</evidence>
<evidence type="ECO:0000312" key="26">
    <source>
        <dbReference type="FlyBase" id="FBgn0041579"/>
    </source>
</evidence>
<name>ATTC_DROME</name>
<feature type="signal peptide" evidence="1">
    <location>
        <begin position="1"/>
        <end position="21"/>
    </location>
</feature>
<feature type="propeptide" id="PRO_0000004897" evidence="1 12">
    <location>
        <begin position="22"/>
        <end position="23"/>
    </location>
</feature>
<feature type="chain" id="PRO_0000004898" description="Attacin-C">
    <location>
        <begin position="24"/>
        <end position="241"/>
    </location>
</feature>
<feature type="peptide" id="PRO_0000004899" description="Immune-induced peptide 16">
    <location>
        <begin position="24"/>
        <end position="46"/>
    </location>
</feature>
<feature type="modified residue" description="Pyrrolidone carboxylic acid" evidence="4">
    <location>
        <position position="24"/>
    </location>
</feature>
<feature type="modified residue" description="Phosphoserine" evidence="5">
    <location>
        <position position="127"/>
    </location>
</feature>
<feature type="glycosylation site" description="O-linked (GalNAc...) threonine" evidence="4">
    <location>
        <position position="39"/>
    </location>
</feature>
<feature type="sequence variant" description="In strain: Berkeley." evidence="12">
    <location>
        <begin position="27"/>
        <end position="45"/>
    </location>
</feature>
<feature type="sequence variant" description="In strain: Berkeley." evidence="12">
    <original>G</original>
    <variation>E</variation>
    <location>
        <position position="165"/>
    </location>
</feature>
<feature type="sequence conflict" description="In Ref. 2; AAL23633/AAL23634." evidence="12" ref="2">
    <original>I</original>
    <variation>T</variation>
    <location>
        <position position="4"/>
    </location>
</feature>
<feature type="sequence conflict" description="In Ref. 2; AAL23640." evidence="12" ref="2">
    <original>I</original>
    <variation>F</variation>
    <location>
        <position position="8"/>
    </location>
</feature>
<feature type="sequence conflict" description="In Ref. 2; AAL23635/AAL23638/AAL23639." evidence="12" ref="2">
    <original>V</original>
    <variation>L</variation>
    <location>
        <position position="84"/>
    </location>
</feature>
<feature type="sequence conflict" description="In Ref. 1; AAG42833." evidence="12" ref="1">
    <original>I</original>
    <variation>V</variation>
    <location>
        <position position="173"/>
    </location>
</feature>
<feature type="sequence conflict" description="In Ref. 2; AAL23634/AAL23639." evidence="12" ref="2">
    <original>Y</original>
    <variation>S</variation>
    <location>
        <position position="239"/>
    </location>
</feature>
<gene>
    <name evidence="7 26" type="primary">AttC</name>
    <name evidence="26" type="synonym">IM16</name>
    <name evidence="26" type="ORF">CG4740</name>
</gene>
<comment type="function">
    <text>Has antimicrobial activity in synergy with other peptides. Strongest activity observed against E.cloacae.</text>
</comment>
<comment type="subcellular location">
    <subcellularLocation>
        <location evidence="4 6">Secreted</location>
    </subcellularLocation>
</comment>
<comment type="tissue specificity">
    <text evidence="6">Hemolymph (at protein level).</text>
</comment>
<comment type="induction">
    <text evidence="3 6">By bacterial infection (at protein level) (PubMed:9736738). Detected within 24 hours of bacterial infection (PubMed:11118328).</text>
</comment>
<comment type="mass spectrometry" mass="2972.38" method="MALDI" evidence="6 12">
    <molecule>Immune-induced peptide 16</molecule>
</comment>
<comment type="miscellaneous">
    <text evidence="3 6">Not induced by bacterial challenge in imd mutant flies. Level of induction reduced by over 90% in 18w mutant flies. Toll loss-of-function mutation has no effect on induction by a mixture of E.coli and M.luteus; but strongly reduces induction by E.cloacae.</text>
</comment>
<comment type="similarity">
    <text evidence="12">Belongs to the attacin/sarcotoxin-2 family.</text>
</comment>
<comment type="caution">
    <text evidence="12">The Berkeley strain used in the genome project has an 8 bp deletion relative to the Canton-S strain, which disrupts the open reading frame. The Berkeley strain may carry a null allele of the AttC gene.</text>
</comment>
<dbReference type="EMBL" id="AF322248">
    <property type="protein sequence ID" value="AAG42832.2"/>
    <property type="molecule type" value="Genomic_DNA"/>
</dbReference>
<dbReference type="EMBL" id="AF322249">
    <property type="protein sequence ID" value="AAG42833.2"/>
    <property type="molecule type" value="mRNA"/>
</dbReference>
<dbReference type="EMBL" id="AY056843">
    <property type="protein sequence ID" value="AAL23629.1"/>
    <property type="molecule type" value="Genomic_DNA"/>
</dbReference>
<dbReference type="EMBL" id="AY056844">
    <property type="protein sequence ID" value="AAL23630.1"/>
    <property type="molecule type" value="Genomic_DNA"/>
</dbReference>
<dbReference type="EMBL" id="AY056845">
    <property type="protein sequence ID" value="AAL23631.1"/>
    <property type="molecule type" value="Genomic_DNA"/>
</dbReference>
<dbReference type="EMBL" id="AY056846">
    <property type="protein sequence ID" value="AAL23632.1"/>
    <property type="molecule type" value="Genomic_DNA"/>
</dbReference>
<dbReference type="EMBL" id="AY056847">
    <property type="protein sequence ID" value="AAL23633.1"/>
    <property type="molecule type" value="Genomic_DNA"/>
</dbReference>
<dbReference type="EMBL" id="AY056848">
    <property type="protein sequence ID" value="AAL23634.1"/>
    <property type="molecule type" value="Genomic_DNA"/>
</dbReference>
<dbReference type="EMBL" id="AY056849">
    <property type="protein sequence ID" value="AAL23635.1"/>
    <property type="molecule type" value="Genomic_DNA"/>
</dbReference>
<dbReference type="EMBL" id="AY056850">
    <property type="protein sequence ID" value="AAL23636.1"/>
    <property type="molecule type" value="Genomic_DNA"/>
</dbReference>
<dbReference type="EMBL" id="AY056851">
    <property type="protein sequence ID" value="AAL23637.1"/>
    <property type="molecule type" value="Genomic_DNA"/>
</dbReference>
<dbReference type="EMBL" id="AY056852">
    <property type="protein sequence ID" value="AAL23638.1"/>
    <property type="molecule type" value="Genomic_DNA"/>
</dbReference>
<dbReference type="EMBL" id="AY056853">
    <property type="protein sequence ID" value="AAL23639.1"/>
    <property type="molecule type" value="Genomic_DNA"/>
</dbReference>
<dbReference type="EMBL" id="AY056854">
    <property type="protein sequence ID" value="AAL23640.1"/>
    <property type="molecule type" value="Genomic_DNA"/>
</dbReference>
<dbReference type="EMBL" id="AE013599">
    <property type="protein sequence ID" value="AAM68570.2"/>
    <property type="molecule type" value="Genomic_DNA"/>
</dbReference>
<dbReference type="RefSeq" id="NP_523729.3">
    <property type="nucleotide sequence ID" value="NM_079005.4"/>
</dbReference>
<dbReference type="BioGRID" id="62245">
    <property type="interactions" value="2"/>
</dbReference>
<dbReference type="FunCoup" id="Q95NH6">
    <property type="interactions" value="30"/>
</dbReference>
<dbReference type="STRING" id="7227.FBpp0297062"/>
<dbReference type="GlyCosmos" id="Q95NH6">
    <property type="glycosylation" value="1 site, No reported glycans"/>
</dbReference>
<dbReference type="GlyGen" id="Q95NH6">
    <property type="glycosylation" value="1 site"/>
</dbReference>
<dbReference type="iPTMnet" id="Q95NH6"/>
<dbReference type="PaxDb" id="7227-FBpp0297062"/>
<dbReference type="EnsemblMetazoa" id="FBtr0305795">
    <property type="protein sequence ID" value="FBpp0297062"/>
    <property type="gene ID" value="FBgn0041579"/>
</dbReference>
<dbReference type="GeneID" id="36484"/>
<dbReference type="KEGG" id="dme:Dmel_CG4740"/>
<dbReference type="AGR" id="FB:FBgn0041579"/>
<dbReference type="CTD" id="36484"/>
<dbReference type="FlyBase" id="FBgn0041579">
    <property type="gene designation" value="AttC"/>
</dbReference>
<dbReference type="VEuPathDB" id="VectorBase:FBgn0041579"/>
<dbReference type="eggNOG" id="ENOG502SZ31">
    <property type="taxonomic scope" value="Eukaryota"/>
</dbReference>
<dbReference type="HOGENOM" id="CLU_1163607_0_0_1"/>
<dbReference type="InParanoid" id="Q95NH6"/>
<dbReference type="OrthoDB" id="7441167at2759"/>
<dbReference type="PhylomeDB" id="Q95NH6"/>
<dbReference type="BioGRID-ORCS" id="36484">
    <property type="hits" value="0 hits in 1 CRISPR screen"/>
</dbReference>
<dbReference type="GenomeRNAi" id="36484"/>
<dbReference type="PRO" id="PR:Q95NH6"/>
<dbReference type="Proteomes" id="UP000000803">
    <property type="component" value="Chromosome 2R"/>
</dbReference>
<dbReference type="Bgee" id="FBgn0041579">
    <property type="expression patterns" value="Expressed in visual pigment cell (sensu Nematoda and Protostomia) in testis and 66 other cell types or tissues"/>
</dbReference>
<dbReference type="ExpressionAtlas" id="Q95NH6">
    <property type="expression patterns" value="baseline and differential"/>
</dbReference>
<dbReference type="GO" id="GO:0005576">
    <property type="term" value="C:extracellular region"/>
    <property type="evidence" value="ECO:0000314"/>
    <property type="project" value="UniProtKB"/>
</dbReference>
<dbReference type="GO" id="GO:0005615">
    <property type="term" value="C:extracellular space"/>
    <property type="evidence" value="ECO:0000314"/>
    <property type="project" value="FlyBase"/>
</dbReference>
<dbReference type="GO" id="GO:0019731">
    <property type="term" value="P:antibacterial humoral response"/>
    <property type="evidence" value="ECO:0000314"/>
    <property type="project" value="UniProtKB"/>
</dbReference>
<dbReference type="GO" id="GO:0006952">
    <property type="term" value="P:defense response"/>
    <property type="evidence" value="ECO:0000314"/>
    <property type="project" value="FlyBase"/>
</dbReference>
<dbReference type="GO" id="GO:0050830">
    <property type="term" value="P:defense response to Gram-positive bacterium"/>
    <property type="evidence" value="ECO:0000270"/>
    <property type="project" value="FlyBase"/>
</dbReference>
<dbReference type="GO" id="GO:0006959">
    <property type="term" value="P:humoral immune response"/>
    <property type="evidence" value="ECO:0000270"/>
    <property type="project" value="FlyBase"/>
</dbReference>
<dbReference type="GO" id="GO:0045087">
    <property type="term" value="P:innate immune response"/>
    <property type="evidence" value="ECO:0007669"/>
    <property type="project" value="UniProtKB-KW"/>
</dbReference>
<dbReference type="GO" id="GO:0009617">
    <property type="term" value="P:response to bacterium"/>
    <property type="evidence" value="ECO:0007007"/>
    <property type="project" value="FlyBase"/>
</dbReference>
<dbReference type="InterPro" id="IPR005521">
    <property type="entry name" value="Attacin_C"/>
</dbReference>
<dbReference type="InterPro" id="IPR005520">
    <property type="entry name" value="Attacin_N"/>
</dbReference>
<dbReference type="Pfam" id="PF03769">
    <property type="entry name" value="Attacin_C"/>
    <property type="match status" value="1"/>
</dbReference>
<dbReference type="Pfam" id="PF03768">
    <property type="entry name" value="Attacin_N"/>
    <property type="match status" value="1"/>
</dbReference>
<sequence length="241" mass="25535">MSKIVLLIVVIVGVLGSLAVALPQRPYTQPLIYYPPPPTPPRIYRARRQVLGGSLTSNPSGGADARLDLSKAVGTPDHHVIGQVFAAGNTQTKPVSTPVTSGATLGYNNHGHGLELTKTHTPGVRDSFQQTATANLFNNGVHNLDAKAFASQNQLANGFKFDRNGAALDYSHIKGHGATLTHANIPGLGKQLELGGRANLWQSQDRNTRLDLGSTASKWTSGPFKGQTDLGANLGLSHYFG</sequence>
<proteinExistence type="evidence at protein level"/>
<keyword id="KW-0044">Antibiotic</keyword>
<keyword id="KW-0929">Antimicrobial</keyword>
<keyword id="KW-0903">Direct protein sequencing</keyword>
<keyword id="KW-0325">Glycoprotein</keyword>
<keyword id="KW-0391">Immunity</keyword>
<keyword id="KW-0399">Innate immunity</keyword>
<keyword id="KW-0597">Phosphoprotein</keyword>
<keyword id="KW-0873">Pyrrolidone carboxylic acid</keyword>
<keyword id="KW-1185">Reference proteome</keyword>
<keyword id="KW-0964">Secreted</keyword>
<keyword id="KW-0732">Signal</keyword>
<protein>
    <recommendedName>
        <fullName evidence="7">Attacin-C</fullName>
    </recommendedName>
    <component>
        <recommendedName>
            <fullName evidence="8">Immune-induced peptide 16</fullName>
            <shortName evidence="8">DIM-16</shortName>
            <shortName evidence="11">DIM16</shortName>
        </recommendedName>
        <alternativeName>
            <fullName evidence="8">MPAC</fullName>
        </alternativeName>
    </component>
</protein>
<accession>Q95NH6</accession>
<accession>Q8ML72</accession>
<accession>Q95NK2</accession>
<accession>Q95UA2</accession>
<accession>Q95UA3</accession>
<accession>Q95UA4</accession>
<accession>Q95UA5</accession>
<accession>Q9GPI3</accession>
<accession>Q9GPI4</accession>